<keyword id="KW-0378">Hydrolase</keyword>
<keyword id="KW-0408">Iron</keyword>
<keyword id="KW-0479">Metal-binding</keyword>
<keyword id="KW-0648">Protein biosynthesis</keyword>
<feature type="chain" id="PRO_1000097364" description="Peptide deformylase">
    <location>
        <begin position="1"/>
        <end position="170"/>
    </location>
</feature>
<feature type="active site" evidence="1">
    <location>
        <position position="134"/>
    </location>
</feature>
<feature type="binding site" evidence="1">
    <location>
        <position position="91"/>
    </location>
    <ligand>
        <name>Fe cation</name>
        <dbReference type="ChEBI" id="CHEBI:24875"/>
    </ligand>
</feature>
<feature type="binding site" evidence="1">
    <location>
        <position position="133"/>
    </location>
    <ligand>
        <name>Fe cation</name>
        <dbReference type="ChEBI" id="CHEBI:24875"/>
    </ligand>
</feature>
<feature type="binding site" evidence="1">
    <location>
        <position position="137"/>
    </location>
    <ligand>
        <name>Fe cation</name>
        <dbReference type="ChEBI" id="CHEBI:24875"/>
    </ligand>
</feature>
<evidence type="ECO:0000255" key="1">
    <source>
        <dbReference type="HAMAP-Rule" id="MF_00163"/>
    </source>
</evidence>
<sequence>MSVLQVLHYPDERLRKIAAPVKEVNGEIQRIVDDMFETMYAEEGIGLAATQVDVHQQIIVIDISENRDQRLVLINPELLEKSGETGIEEGCLSIPEQRALVPRAEKVKIRALDRDGKPFELETDGLLAICIQHEMDHLIGKLFVDYLSPLKRQRIRQKLEKMAKLNARAN</sequence>
<protein>
    <recommendedName>
        <fullName evidence="1">Peptide deformylase</fullName>
        <shortName evidence="1">PDF</shortName>
        <ecNumber evidence="1">3.5.1.88</ecNumber>
    </recommendedName>
    <alternativeName>
        <fullName evidence="1">Polypeptide deformylase</fullName>
    </alternativeName>
</protein>
<organism>
    <name type="scientific">Yersinia pestis bv. Antiqua (strain Angola)</name>
    <dbReference type="NCBI Taxonomy" id="349746"/>
    <lineage>
        <taxon>Bacteria</taxon>
        <taxon>Pseudomonadati</taxon>
        <taxon>Pseudomonadota</taxon>
        <taxon>Gammaproteobacteria</taxon>
        <taxon>Enterobacterales</taxon>
        <taxon>Yersiniaceae</taxon>
        <taxon>Yersinia</taxon>
    </lineage>
</organism>
<dbReference type="EC" id="3.5.1.88" evidence="1"/>
<dbReference type="EMBL" id="CP000901">
    <property type="protein sequence ID" value="ABX85024.1"/>
    <property type="molecule type" value="Genomic_DNA"/>
</dbReference>
<dbReference type="RefSeq" id="WP_002209021.1">
    <property type="nucleotide sequence ID" value="NZ_CP009935.1"/>
</dbReference>
<dbReference type="SMR" id="A9R927"/>
<dbReference type="GeneID" id="57974362"/>
<dbReference type="KEGG" id="ypg:YpAngola_A0615"/>
<dbReference type="PATRIC" id="fig|349746.12.peg.1567"/>
<dbReference type="GO" id="GO:0046872">
    <property type="term" value="F:metal ion binding"/>
    <property type="evidence" value="ECO:0007669"/>
    <property type="project" value="UniProtKB-KW"/>
</dbReference>
<dbReference type="GO" id="GO:0042586">
    <property type="term" value="F:peptide deformylase activity"/>
    <property type="evidence" value="ECO:0007669"/>
    <property type="project" value="UniProtKB-UniRule"/>
</dbReference>
<dbReference type="GO" id="GO:0043686">
    <property type="term" value="P:co-translational protein modification"/>
    <property type="evidence" value="ECO:0007669"/>
    <property type="project" value="TreeGrafter"/>
</dbReference>
<dbReference type="GO" id="GO:0006412">
    <property type="term" value="P:translation"/>
    <property type="evidence" value="ECO:0007669"/>
    <property type="project" value="UniProtKB-UniRule"/>
</dbReference>
<dbReference type="CDD" id="cd00487">
    <property type="entry name" value="Pep_deformylase"/>
    <property type="match status" value="1"/>
</dbReference>
<dbReference type="FunFam" id="3.90.45.10:FF:000001">
    <property type="entry name" value="Peptide deformylase"/>
    <property type="match status" value="1"/>
</dbReference>
<dbReference type="Gene3D" id="3.90.45.10">
    <property type="entry name" value="Peptide deformylase"/>
    <property type="match status" value="1"/>
</dbReference>
<dbReference type="HAMAP" id="MF_00163">
    <property type="entry name" value="Pep_deformylase"/>
    <property type="match status" value="1"/>
</dbReference>
<dbReference type="InterPro" id="IPR023635">
    <property type="entry name" value="Peptide_deformylase"/>
</dbReference>
<dbReference type="InterPro" id="IPR036821">
    <property type="entry name" value="Peptide_deformylase_sf"/>
</dbReference>
<dbReference type="NCBIfam" id="TIGR00079">
    <property type="entry name" value="pept_deformyl"/>
    <property type="match status" value="1"/>
</dbReference>
<dbReference type="NCBIfam" id="NF001159">
    <property type="entry name" value="PRK00150.1-3"/>
    <property type="match status" value="1"/>
</dbReference>
<dbReference type="PANTHER" id="PTHR10458">
    <property type="entry name" value="PEPTIDE DEFORMYLASE"/>
    <property type="match status" value="1"/>
</dbReference>
<dbReference type="PANTHER" id="PTHR10458:SF21">
    <property type="entry name" value="PEPTIDE DEFORMYLASE"/>
    <property type="match status" value="1"/>
</dbReference>
<dbReference type="Pfam" id="PF01327">
    <property type="entry name" value="Pep_deformylase"/>
    <property type="match status" value="1"/>
</dbReference>
<dbReference type="PIRSF" id="PIRSF004749">
    <property type="entry name" value="Pep_def"/>
    <property type="match status" value="1"/>
</dbReference>
<dbReference type="PRINTS" id="PR01576">
    <property type="entry name" value="PDEFORMYLASE"/>
</dbReference>
<dbReference type="SUPFAM" id="SSF56420">
    <property type="entry name" value="Peptide deformylase"/>
    <property type="match status" value="1"/>
</dbReference>
<accession>A9R927</accession>
<proteinExistence type="inferred from homology"/>
<comment type="function">
    <text evidence="1">Removes the formyl group from the N-terminal Met of newly synthesized proteins. Requires at least a dipeptide for an efficient rate of reaction. N-terminal L-methionine is a prerequisite for activity but the enzyme has broad specificity at other positions.</text>
</comment>
<comment type="catalytic activity">
    <reaction evidence="1">
        <text>N-terminal N-formyl-L-methionyl-[peptide] + H2O = N-terminal L-methionyl-[peptide] + formate</text>
        <dbReference type="Rhea" id="RHEA:24420"/>
        <dbReference type="Rhea" id="RHEA-COMP:10639"/>
        <dbReference type="Rhea" id="RHEA-COMP:10640"/>
        <dbReference type="ChEBI" id="CHEBI:15377"/>
        <dbReference type="ChEBI" id="CHEBI:15740"/>
        <dbReference type="ChEBI" id="CHEBI:49298"/>
        <dbReference type="ChEBI" id="CHEBI:64731"/>
        <dbReference type="EC" id="3.5.1.88"/>
    </reaction>
</comment>
<comment type="cofactor">
    <cofactor evidence="1">
        <name>Fe(2+)</name>
        <dbReference type="ChEBI" id="CHEBI:29033"/>
    </cofactor>
    <text evidence="1">Binds 1 Fe(2+) ion.</text>
</comment>
<comment type="similarity">
    <text evidence="1">Belongs to the polypeptide deformylase family.</text>
</comment>
<reference key="1">
    <citation type="journal article" date="2010" name="J. Bacteriol.">
        <title>Genome sequence of the deep-rooted Yersinia pestis strain Angola reveals new insights into the evolution and pangenome of the plague bacterium.</title>
        <authorList>
            <person name="Eppinger M."/>
            <person name="Worsham P.L."/>
            <person name="Nikolich M.P."/>
            <person name="Riley D.R."/>
            <person name="Sebastian Y."/>
            <person name="Mou S."/>
            <person name="Achtman M."/>
            <person name="Lindler L.E."/>
            <person name="Ravel J."/>
        </authorList>
    </citation>
    <scope>NUCLEOTIDE SEQUENCE [LARGE SCALE GENOMIC DNA]</scope>
    <source>
        <strain>Angola</strain>
    </source>
</reference>
<gene>
    <name evidence="1" type="primary">def</name>
    <name type="ordered locus">YpAngola_A0615</name>
</gene>
<name>DEF_YERPG</name>